<keyword id="KW-0227">DNA damage</keyword>
<keyword id="KW-0234">DNA repair</keyword>
<keyword id="KW-0238">DNA-binding</keyword>
<keyword id="KW-0326">Glycosidase</keyword>
<keyword id="KW-0378">Hydrolase</keyword>
<keyword id="KW-0456">Lyase</keyword>
<keyword id="KW-0479">Metal-binding</keyword>
<keyword id="KW-0511">Multifunctional enzyme</keyword>
<keyword id="KW-0862">Zinc</keyword>
<keyword id="KW-0863">Zinc-finger</keyword>
<protein>
    <recommendedName>
        <fullName evidence="2">Formamidopyrimidine-DNA glycosylase</fullName>
        <shortName evidence="2">Fapy-DNA glycosylase</shortName>
        <ecNumber evidence="2">3.2.2.23</ecNumber>
    </recommendedName>
    <alternativeName>
        <fullName evidence="2">DNA-(apurinic or apyrimidinic site) lyase MutM</fullName>
        <shortName evidence="2">AP lyase MutM</shortName>
        <ecNumber evidence="2">4.2.99.18</ecNumber>
    </alternativeName>
</protein>
<organism>
    <name type="scientific">Mycobacterium sp. (strain KMS)</name>
    <dbReference type="NCBI Taxonomy" id="189918"/>
    <lineage>
        <taxon>Bacteria</taxon>
        <taxon>Bacillati</taxon>
        <taxon>Actinomycetota</taxon>
        <taxon>Actinomycetes</taxon>
        <taxon>Mycobacteriales</taxon>
        <taxon>Mycobacteriaceae</taxon>
        <taxon>Mycobacterium</taxon>
    </lineage>
</organism>
<accession>A1UED7</accession>
<gene>
    <name evidence="2" type="primary">mutM</name>
    <name evidence="2" type="synonym">fpg</name>
    <name type="ordered locus">Mkms_1996</name>
</gene>
<feature type="initiator methionine" description="Removed" evidence="1">
    <location>
        <position position="1"/>
    </location>
</feature>
<feature type="chain" id="PRO_1000008721" description="Formamidopyrimidine-DNA glycosylase">
    <location>
        <begin position="2"/>
        <end position="296"/>
    </location>
</feature>
<feature type="zinc finger region" description="FPG-type" evidence="2">
    <location>
        <begin position="255"/>
        <end position="289"/>
    </location>
</feature>
<feature type="active site" description="Schiff-base intermediate with DNA" evidence="2">
    <location>
        <position position="2"/>
    </location>
</feature>
<feature type="active site" description="Proton donor" evidence="2">
    <location>
        <position position="3"/>
    </location>
</feature>
<feature type="active site" description="Proton donor; for beta-elimination activity" evidence="2">
    <location>
        <position position="61"/>
    </location>
</feature>
<feature type="active site" description="Proton donor; for delta-elimination activity" evidence="2">
    <location>
        <position position="279"/>
    </location>
</feature>
<feature type="binding site" evidence="2">
    <location>
        <position position="104"/>
    </location>
    <ligand>
        <name>DNA</name>
        <dbReference type="ChEBI" id="CHEBI:16991"/>
    </ligand>
</feature>
<feature type="binding site" evidence="2">
    <location>
        <position position="123"/>
    </location>
    <ligand>
        <name>DNA</name>
        <dbReference type="ChEBI" id="CHEBI:16991"/>
    </ligand>
</feature>
<feature type="binding site" evidence="2">
    <location>
        <position position="169"/>
    </location>
    <ligand>
        <name>DNA</name>
        <dbReference type="ChEBI" id="CHEBI:16991"/>
    </ligand>
</feature>
<dbReference type="EC" id="3.2.2.23" evidence="2"/>
<dbReference type="EC" id="4.2.99.18" evidence="2"/>
<dbReference type="EMBL" id="CP000518">
    <property type="protein sequence ID" value="ABL91195.1"/>
    <property type="molecule type" value="Genomic_DNA"/>
</dbReference>
<dbReference type="SMR" id="A1UED7"/>
<dbReference type="STRING" id="189918.Mkms_1996"/>
<dbReference type="KEGG" id="mkm:Mkms_1996"/>
<dbReference type="HOGENOM" id="CLU_038423_1_2_11"/>
<dbReference type="OrthoDB" id="9800855at2"/>
<dbReference type="GO" id="GO:0034039">
    <property type="term" value="F:8-oxo-7,8-dihydroguanine DNA N-glycosylase activity"/>
    <property type="evidence" value="ECO:0007669"/>
    <property type="project" value="TreeGrafter"/>
</dbReference>
<dbReference type="GO" id="GO:0140078">
    <property type="term" value="F:class I DNA-(apurinic or apyrimidinic site) endonuclease activity"/>
    <property type="evidence" value="ECO:0007669"/>
    <property type="project" value="UniProtKB-EC"/>
</dbReference>
<dbReference type="GO" id="GO:0003684">
    <property type="term" value="F:damaged DNA binding"/>
    <property type="evidence" value="ECO:0007669"/>
    <property type="project" value="InterPro"/>
</dbReference>
<dbReference type="GO" id="GO:0008270">
    <property type="term" value="F:zinc ion binding"/>
    <property type="evidence" value="ECO:0007669"/>
    <property type="project" value="UniProtKB-UniRule"/>
</dbReference>
<dbReference type="GO" id="GO:0006284">
    <property type="term" value="P:base-excision repair"/>
    <property type="evidence" value="ECO:0007669"/>
    <property type="project" value="InterPro"/>
</dbReference>
<dbReference type="CDD" id="cd08966">
    <property type="entry name" value="EcFpg-like_N"/>
    <property type="match status" value="1"/>
</dbReference>
<dbReference type="FunFam" id="1.10.8.50:FF:000003">
    <property type="entry name" value="Formamidopyrimidine-DNA glycosylase"/>
    <property type="match status" value="1"/>
</dbReference>
<dbReference type="FunFam" id="3.20.190.10:FF:000006">
    <property type="entry name" value="Formamidopyrimidine-DNA glycosylase"/>
    <property type="match status" value="1"/>
</dbReference>
<dbReference type="Gene3D" id="1.10.8.50">
    <property type="match status" value="1"/>
</dbReference>
<dbReference type="Gene3D" id="3.20.190.10">
    <property type="entry name" value="MutM-like, N-terminal"/>
    <property type="match status" value="1"/>
</dbReference>
<dbReference type="HAMAP" id="MF_00103">
    <property type="entry name" value="Fapy_DNA_glycosyl"/>
    <property type="match status" value="1"/>
</dbReference>
<dbReference type="InterPro" id="IPR015886">
    <property type="entry name" value="DNA_glyclase/AP_lyase_DNA-bd"/>
</dbReference>
<dbReference type="InterPro" id="IPR015887">
    <property type="entry name" value="DNA_glyclase_Znf_dom_DNA_BS"/>
</dbReference>
<dbReference type="InterPro" id="IPR020629">
    <property type="entry name" value="Formamido-pyr_DNA_Glyclase"/>
</dbReference>
<dbReference type="InterPro" id="IPR012319">
    <property type="entry name" value="FPG_cat"/>
</dbReference>
<dbReference type="InterPro" id="IPR035937">
    <property type="entry name" value="MutM-like_N-ter"/>
</dbReference>
<dbReference type="InterPro" id="IPR010979">
    <property type="entry name" value="Ribosomal_uS13-like_H2TH"/>
</dbReference>
<dbReference type="InterPro" id="IPR000214">
    <property type="entry name" value="Znf_DNA_glyclase/AP_lyase"/>
</dbReference>
<dbReference type="InterPro" id="IPR010663">
    <property type="entry name" value="Znf_FPG/IleRS"/>
</dbReference>
<dbReference type="NCBIfam" id="TIGR00577">
    <property type="entry name" value="fpg"/>
    <property type="match status" value="1"/>
</dbReference>
<dbReference type="NCBIfam" id="NF002211">
    <property type="entry name" value="PRK01103.1"/>
    <property type="match status" value="1"/>
</dbReference>
<dbReference type="PANTHER" id="PTHR22993">
    <property type="entry name" value="FORMAMIDOPYRIMIDINE-DNA GLYCOSYLASE"/>
    <property type="match status" value="1"/>
</dbReference>
<dbReference type="PANTHER" id="PTHR22993:SF9">
    <property type="entry name" value="FORMAMIDOPYRIMIDINE-DNA GLYCOSYLASE"/>
    <property type="match status" value="1"/>
</dbReference>
<dbReference type="Pfam" id="PF01149">
    <property type="entry name" value="Fapy_DNA_glyco"/>
    <property type="match status" value="1"/>
</dbReference>
<dbReference type="Pfam" id="PF06831">
    <property type="entry name" value="H2TH"/>
    <property type="match status" value="1"/>
</dbReference>
<dbReference type="Pfam" id="PF06827">
    <property type="entry name" value="zf-FPG_IleRS"/>
    <property type="match status" value="1"/>
</dbReference>
<dbReference type="SMART" id="SM00898">
    <property type="entry name" value="Fapy_DNA_glyco"/>
    <property type="match status" value="1"/>
</dbReference>
<dbReference type="SMART" id="SM01232">
    <property type="entry name" value="H2TH"/>
    <property type="match status" value="1"/>
</dbReference>
<dbReference type="SUPFAM" id="SSF57716">
    <property type="entry name" value="Glucocorticoid receptor-like (DNA-binding domain)"/>
    <property type="match status" value="1"/>
</dbReference>
<dbReference type="SUPFAM" id="SSF81624">
    <property type="entry name" value="N-terminal domain of MutM-like DNA repair proteins"/>
    <property type="match status" value="1"/>
</dbReference>
<dbReference type="SUPFAM" id="SSF46946">
    <property type="entry name" value="S13-like H2TH domain"/>
    <property type="match status" value="1"/>
</dbReference>
<dbReference type="PROSITE" id="PS51068">
    <property type="entry name" value="FPG_CAT"/>
    <property type="match status" value="1"/>
</dbReference>
<dbReference type="PROSITE" id="PS01242">
    <property type="entry name" value="ZF_FPG_1"/>
    <property type="match status" value="1"/>
</dbReference>
<dbReference type="PROSITE" id="PS51066">
    <property type="entry name" value="ZF_FPG_2"/>
    <property type="match status" value="1"/>
</dbReference>
<comment type="function">
    <text evidence="2">Involved in base excision repair of DNA damaged by oxidation or by mutagenic agents. Acts as a DNA glycosylase that recognizes and removes damaged bases. Has a preference for oxidized purines, such as 7,8-dihydro-8-oxoguanine (8-oxoG). Has AP (apurinic/apyrimidinic) lyase activity and introduces nicks in the DNA strand. Cleaves the DNA backbone by beta-delta elimination to generate a single-strand break at the site of the removed base with both 3'- and 5'-phosphates.</text>
</comment>
<comment type="catalytic activity">
    <reaction evidence="2">
        <text>Hydrolysis of DNA containing ring-opened 7-methylguanine residues, releasing 2,6-diamino-4-hydroxy-5-(N-methyl)formamidopyrimidine.</text>
        <dbReference type="EC" id="3.2.2.23"/>
    </reaction>
</comment>
<comment type="catalytic activity">
    <reaction evidence="2">
        <text>2'-deoxyribonucleotide-(2'-deoxyribose 5'-phosphate)-2'-deoxyribonucleotide-DNA = a 3'-end 2'-deoxyribonucleotide-(2,3-dehydro-2,3-deoxyribose 5'-phosphate)-DNA + a 5'-end 5'-phospho-2'-deoxyribonucleoside-DNA + H(+)</text>
        <dbReference type="Rhea" id="RHEA:66592"/>
        <dbReference type="Rhea" id="RHEA-COMP:13180"/>
        <dbReference type="Rhea" id="RHEA-COMP:16897"/>
        <dbReference type="Rhea" id="RHEA-COMP:17067"/>
        <dbReference type="ChEBI" id="CHEBI:15378"/>
        <dbReference type="ChEBI" id="CHEBI:136412"/>
        <dbReference type="ChEBI" id="CHEBI:157695"/>
        <dbReference type="ChEBI" id="CHEBI:167181"/>
        <dbReference type="EC" id="4.2.99.18"/>
    </reaction>
</comment>
<comment type="cofactor">
    <cofactor evidence="2">
        <name>Zn(2+)</name>
        <dbReference type="ChEBI" id="CHEBI:29105"/>
    </cofactor>
    <text evidence="2">Binds 1 zinc ion per subunit.</text>
</comment>
<comment type="subunit">
    <text evidence="2">Monomer.</text>
</comment>
<comment type="similarity">
    <text evidence="2">Belongs to the FPG family.</text>
</comment>
<proteinExistence type="inferred from homology"/>
<evidence type="ECO:0000250" key="1"/>
<evidence type="ECO:0000255" key="2">
    <source>
        <dbReference type="HAMAP-Rule" id="MF_00103"/>
    </source>
</evidence>
<name>FPG_MYCSK</name>
<sequence>MPELPEVEVVRRGLDAHVTGKAITAVRVHHPRAVRRHEAGPADLTARLLGMRITGTGRRGKYLWLTLDDGDEPLARRAESSVALVVHLGMSGQMLLGPIPKEDHLRIAALFDDGTALSFVDQRTFGGWLLADLVTVDGTDVPVPVAHVARDPLDPRFDRDAVVKVLRGKHSEIKRQLLDQTVVSGIGNIYADEALWRAKVNGARLAESLTKPKLAEILDHAADVMRDALGQGGTSFDSLYVNVNGESGYFDRSLDAYGREGEPCRRCGAIMRRDKFMNRSSFYCPRCQPRPRVRRA</sequence>
<reference key="1">
    <citation type="submission" date="2006-12" db="EMBL/GenBank/DDBJ databases">
        <title>Complete sequence of chromosome of Mycobacterium sp. KMS.</title>
        <authorList>
            <consortium name="US DOE Joint Genome Institute"/>
            <person name="Copeland A."/>
            <person name="Lucas S."/>
            <person name="Lapidus A."/>
            <person name="Barry K."/>
            <person name="Detter J.C."/>
            <person name="Glavina del Rio T."/>
            <person name="Hammon N."/>
            <person name="Israni S."/>
            <person name="Dalin E."/>
            <person name="Tice H."/>
            <person name="Pitluck S."/>
            <person name="Kiss H."/>
            <person name="Brettin T."/>
            <person name="Bruce D."/>
            <person name="Han C."/>
            <person name="Tapia R."/>
            <person name="Gilna P."/>
            <person name="Schmutz J."/>
            <person name="Larimer F."/>
            <person name="Land M."/>
            <person name="Hauser L."/>
            <person name="Kyrpides N."/>
            <person name="Mikhailova N."/>
            <person name="Miller C.D."/>
            <person name="Richardson P."/>
        </authorList>
    </citation>
    <scope>NUCLEOTIDE SEQUENCE [LARGE SCALE GENOMIC DNA]</scope>
    <source>
        <strain>KMS</strain>
    </source>
</reference>